<organismHost>
    <name type="scientific">Homo sapiens</name>
    <name type="common">Human</name>
    <dbReference type="NCBI Taxonomy" id="9606"/>
</organismHost>
<sequence length="98" mass="10918">MRGETPTLQDYVLDLQPEATDLHCYEQLPDSSDEEDVIDSPAGQAEPDTSNYNIVTFCCQCKSTLRLCVQSTQVDIRILQELLMGSFGIVCPNCSTRL</sequence>
<organism>
    <name type="scientific">Human papillomavirus 31</name>
    <dbReference type="NCBI Taxonomy" id="10585"/>
    <lineage>
        <taxon>Viruses</taxon>
        <taxon>Monodnaviria</taxon>
        <taxon>Shotokuvirae</taxon>
        <taxon>Cossaviricota</taxon>
        <taxon>Papovaviricetes</taxon>
        <taxon>Zurhausenvirales</taxon>
        <taxon>Papillomaviridae</taxon>
        <taxon>Firstpapillomavirinae</taxon>
        <taxon>Alphapapillomavirus</taxon>
        <taxon>Alphapapillomavirus 9</taxon>
    </lineage>
</organism>
<dbReference type="EMBL" id="J04353">
    <property type="protein sequence ID" value="AAA46951.1"/>
    <property type="molecule type" value="Genomic_DNA"/>
</dbReference>
<dbReference type="PIR" id="B32444">
    <property type="entry name" value="W7WL31"/>
</dbReference>
<dbReference type="SMR" id="P17387"/>
<dbReference type="IntAct" id="P17387">
    <property type="interactions" value="3"/>
</dbReference>
<dbReference type="MINT" id="P17387"/>
<dbReference type="Proteomes" id="UP000009116">
    <property type="component" value="Genome"/>
</dbReference>
<dbReference type="GO" id="GO:0030430">
    <property type="term" value="C:host cell cytoplasm"/>
    <property type="evidence" value="ECO:0007669"/>
    <property type="project" value="UniProtKB-SubCell"/>
</dbReference>
<dbReference type="GO" id="GO:0042025">
    <property type="term" value="C:host cell nucleus"/>
    <property type="evidence" value="ECO:0007669"/>
    <property type="project" value="UniProtKB-SubCell"/>
</dbReference>
<dbReference type="GO" id="GO:0003677">
    <property type="term" value="F:DNA binding"/>
    <property type="evidence" value="ECO:0007669"/>
    <property type="project" value="UniProtKB-UniRule"/>
</dbReference>
<dbReference type="GO" id="GO:0003700">
    <property type="term" value="F:DNA-binding transcription factor activity"/>
    <property type="evidence" value="ECO:0007669"/>
    <property type="project" value="UniProtKB-UniRule"/>
</dbReference>
<dbReference type="GO" id="GO:0019904">
    <property type="term" value="F:protein domain specific binding"/>
    <property type="evidence" value="ECO:0007669"/>
    <property type="project" value="UniProtKB-UniRule"/>
</dbReference>
<dbReference type="GO" id="GO:0008270">
    <property type="term" value="F:zinc ion binding"/>
    <property type="evidence" value="ECO:0007669"/>
    <property type="project" value="UniProtKB-KW"/>
</dbReference>
<dbReference type="GO" id="GO:0006351">
    <property type="term" value="P:DNA-templated transcription"/>
    <property type="evidence" value="ECO:0007669"/>
    <property type="project" value="UniProtKB-UniRule"/>
</dbReference>
<dbReference type="GO" id="GO:0039645">
    <property type="term" value="P:symbiont-mediated perturbation of host cell cycle G1/S transition checkpoint"/>
    <property type="evidence" value="ECO:0007669"/>
    <property type="project" value="UniProtKB-UniRule"/>
</dbReference>
<dbReference type="GO" id="GO:0052170">
    <property type="term" value="P:symbiont-mediated suppression of host innate immune response"/>
    <property type="evidence" value="ECO:0007669"/>
    <property type="project" value="UniProtKB-KW"/>
</dbReference>
<dbReference type="GO" id="GO:0039502">
    <property type="term" value="P:symbiont-mediated suppression of host type I interferon-mediated signaling pathway"/>
    <property type="evidence" value="ECO:0007669"/>
    <property type="project" value="UniProtKB-UniRule"/>
</dbReference>
<dbReference type="Gene3D" id="3.30.160.330">
    <property type="match status" value="1"/>
</dbReference>
<dbReference type="HAMAP" id="MF_04004">
    <property type="entry name" value="PPV_E7"/>
    <property type="match status" value="1"/>
</dbReference>
<dbReference type="InterPro" id="IPR000148">
    <property type="entry name" value="Papilloma_E7"/>
</dbReference>
<dbReference type="Pfam" id="PF00527">
    <property type="entry name" value="E7"/>
    <property type="match status" value="1"/>
</dbReference>
<dbReference type="PIRSF" id="PIRSF003407">
    <property type="entry name" value="Papvi_E7"/>
    <property type="match status" value="1"/>
</dbReference>
<dbReference type="SUPFAM" id="SSF161234">
    <property type="entry name" value="E7 C-terminal domain-like"/>
    <property type="match status" value="1"/>
</dbReference>
<reference key="1">
    <citation type="journal article" date="1989" name="Virology">
        <title>Nucleotide sequence of human papillomavirus type 31: a cervical neoplasia-associated virus.</title>
        <authorList>
            <person name="Goldsborough M.D."/>
            <person name="Disilvestre D."/>
            <person name="Temple G.F."/>
            <person name="Lorincz A.T."/>
        </authorList>
    </citation>
    <scope>NUCLEOTIDE SEQUENCE [GENOMIC DNA]</scope>
</reference>
<reference key="2">
    <citation type="journal article" date="2004" name="J. Virol.">
        <title>The binding of histone deacetylases and the integrity of zinc finger-like motifs of the E7 protein are essential for the life cycle of human papillomavirus type 31.</title>
        <authorList>
            <person name="Longworth M.S."/>
            <person name="Laimins L.A."/>
        </authorList>
    </citation>
    <scope>FUNCTION</scope>
    <scope>INTERACTION WITH HUMAN RB1; HDAC1 AND HDAC1</scope>
    <scope>MUTAGENESIS OF CYS-61; LEU-67; SER-71; 82-LEU-LEU-83; CYS-91 AND CYS-94</scope>
</reference>
<comment type="function">
    <text evidence="2">E7 protein has both transforming and trans-activating activities. Disrupts the function of host retinoblastoma protein RB1/pRb, which is a key regulator of the cell cycle. Induces the disassembly of the E2F1 transcription factors from RB1, with subsequent transcriptional activation of E2F1-regulated S-phase genes. Inactivation of the ability of RB1 to arrest the cell cycle is critical for cellular transformation, uncontrolled cellular growth and proliferation induced by viral infection. Stimulation of progression from G1 to S phase allows the virus to efficiently use the cellular DNA replicating machinery to achieve viral genome replication. Interferes with histone deacetylation mediated by HDAC1 and HDAC2, leading to activation of transcription.</text>
</comment>
<comment type="function">
    <text evidence="1">Plays a role in viral genome replication by driving entry of quiescent cells into the cell cycle. Stimulation of progression from G1 to S phase allows the virus to efficiently use the cellular DNA replicating machinery to achieve viral genome replication. E7 protein has both transforming and trans-activating activities. Induces the disassembly of the E2F1 transcription factor from RB1, with subsequent transcriptional activation of E2F1-regulated S-phase genes. Interferes with host histone deacetylation mediated by HDAC1 and HDAC2, leading to transcription activation. Also plays a role in the inhibition of both antiviral and antiproliferative functions of host interferon alpha. Interaction with host TMEM173/STING impairs the ability of TMEM173/STING to sense cytosolic DNA and promote the production of type I interferon (IFN-alpha and IFN-beta).</text>
</comment>
<comment type="subunit">
    <text evidence="1">Homodimer. Homooligomer. Interacts with host RB1; this interaction induces dissociation of RB1-E2F1 complex thereby disrupting RB1 activity. Interacts with host EP300; this interaction represses EP300 transcriptional activity. Interacts with protein E2; this interaction inhibits E7 oncogenic activity. Interacts with host TMEM173/STING; this interaction impairs the ability of TMEM173/STING to sense cytosolic DNA and promote the production of type I interferon (IFN-alpha and IFN-beta).</text>
</comment>
<comment type="subcellular location">
    <subcellularLocation>
        <location evidence="1">Host cytoplasm</location>
    </subcellularLocation>
    <subcellularLocation>
        <location evidence="1">Host nucleus</location>
    </subcellularLocation>
    <text evidence="1">Predominantly found in the host nucleus.</text>
</comment>
<comment type="domain">
    <text evidence="1">The E7 terminal domain is an intrinsically disordered domain, whose flexibility and conformational transitions confer target adaptability to the oncoprotein. It allows adaptation to a variety of protein targets and exposes the PEST degradation sequence that regulates its turnover in the cell.</text>
</comment>
<comment type="PTM">
    <text evidence="1">Highly phosphorylated.</text>
</comment>
<comment type="similarity">
    <text evidence="1">Belongs to the papillomaviridae E7 protein family.</text>
</comment>
<feature type="chain" id="PRO_0000133429" description="Protein E7">
    <location>
        <begin position="1"/>
        <end position="98"/>
    </location>
</feature>
<feature type="zinc finger region" evidence="1">
    <location>
        <begin position="58"/>
        <end position="94"/>
    </location>
</feature>
<feature type="region of interest" description="E7 terminal domain" evidence="1">
    <location>
        <begin position="1"/>
        <end position="40"/>
    </location>
</feature>
<feature type="short sequence motif" description="LXCXE motif; interaction with host RB1 and TMEM173/STING" evidence="1">
    <location>
        <begin position="22"/>
        <end position="26"/>
    </location>
</feature>
<feature type="short sequence motif" description="Nuclear export signal" evidence="1">
    <location>
        <begin position="76"/>
        <end position="84"/>
    </location>
</feature>
<feature type="mutagenesis site" description="No effect on the binding to HDAC1 and HDAC2. Reduced copy number of episomes. Impaired production of late transcripts." evidence="2">
    <original>C</original>
    <variation>A</variation>
    <location>
        <position position="61"/>
    </location>
</feature>
<feature type="mutagenesis site" description="Complete loss of binding to HDAC1 and HDAC2. Complete loss of episomes. Impaired production of late transcripts." evidence="2">
    <original>L</original>
    <variation>R</variation>
    <location>
        <position position="67"/>
    </location>
</feature>
<feature type="mutagenesis site" description="No effect on the binding to HDAC1 and HDAC2." evidence="2">
    <original>S</original>
    <variation>C</variation>
    <location>
        <position position="71"/>
    </location>
</feature>
<feature type="mutagenesis site" description="No effect on the binding to HDAC1 and HDAC2. Impaired production of late transcripts." evidence="2">
    <original>LL</original>
    <variation>RR</variation>
    <location>
        <begin position="82"/>
        <end position="83"/>
    </location>
</feature>
<feature type="mutagenesis site" description="Reduced binding to HDAC1 and HDAC2. Reduced copy number of episomes. Impaired production of late transcripts." evidence="2">
    <original>C</original>
    <variation>G</variation>
    <location>
        <position position="91"/>
    </location>
</feature>
<feature type="mutagenesis site" description="No effect on the binding to HDAC1 and HDAC2. Reduced copy number of episomes. Impaired production of late transcripts." evidence="2">
    <original>C</original>
    <variation>A</variation>
    <location>
        <position position="94"/>
    </location>
</feature>
<proteinExistence type="evidence at protein level"/>
<accession>P17387</accession>
<protein>
    <recommendedName>
        <fullName evidence="1">Protein E7</fullName>
    </recommendedName>
</protein>
<name>VE7_HPV31</name>
<evidence type="ECO:0000255" key="1">
    <source>
        <dbReference type="HAMAP-Rule" id="MF_04004"/>
    </source>
</evidence>
<evidence type="ECO:0000269" key="2">
    <source>
    </source>
</evidence>
<gene>
    <name evidence="1" type="primary">E7</name>
</gene>
<keyword id="KW-0010">Activator</keyword>
<keyword id="KW-0238">DNA-binding</keyword>
<keyword id="KW-0244">Early protein</keyword>
<keyword id="KW-1078">G1/S host cell cycle checkpoint dysregulation by virus</keyword>
<keyword id="KW-1035">Host cytoplasm</keyword>
<keyword id="KW-1048">Host nucleus</keyword>
<keyword id="KW-0945">Host-virus interaction</keyword>
<keyword id="KW-1090">Inhibition of host innate immune response by virus</keyword>
<keyword id="KW-1114">Inhibition of host interferon signaling pathway by virus</keyword>
<keyword id="KW-0922">Interferon antiviral system evasion</keyword>
<keyword id="KW-0479">Metal-binding</keyword>
<keyword id="KW-1121">Modulation of host cell cycle by virus</keyword>
<keyword id="KW-0553">Oncogene</keyword>
<keyword id="KW-1185">Reference proteome</keyword>
<keyword id="KW-0804">Transcription</keyword>
<keyword id="KW-0805">Transcription regulation</keyword>
<keyword id="KW-0899">Viral immunoevasion</keyword>
<keyword id="KW-0862">Zinc</keyword>
<keyword id="KW-0863">Zinc-finger</keyword>